<name>ADHX_SCYCA</name>
<dbReference type="EC" id="1.1.1.1" evidence="1"/>
<dbReference type="EC" id="1.1.1.-"/>
<dbReference type="EC" id="1.1.1.284" evidence="1"/>
<dbReference type="SMR" id="P86884"/>
<dbReference type="BRENDA" id="1.1.1.1">
    <property type="organism ID" value="5640"/>
</dbReference>
<dbReference type="GO" id="GO:0005829">
    <property type="term" value="C:cytosol"/>
    <property type="evidence" value="ECO:0007669"/>
    <property type="project" value="TreeGrafter"/>
</dbReference>
<dbReference type="GO" id="GO:0004022">
    <property type="term" value="F:alcohol dehydrogenase (NAD+) activity"/>
    <property type="evidence" value="ECO:0007669"/>
    <property type="project" value="UniProtKB-EC"/>
</dbReference>
<dbReference type="GO" id="GO:0106322">
    <property type="term" value="F:S-(hydroxymethyl)glutathione dehydrogenase (NAD+) activity"/>
    <property type="evidence" value="ECO:0007669"/>
    <property type="project" value="RHEA"/>
</dbReference>
<dbReference type="GO" id="GO:0106321">
    <property type="term" value="F:S-(hydroxymethyl)glutathione dehydrogenase (NADP+) activity"/>
    <property type="evidence" value="ECO:0007669"/>
    <property type="project" value="RHEA"/>
</dbReference>
<dbReference type="GO" id="GO:0080007">
    <property type="term" value="F:S-nitrosoglutathione reductase (NADH) activity"/>
    <property type="evidence" value="ECO:0007669"/>
    <property type="project" value="RHEA"/>
</dbReference>
<dbReference type="GO" id="GO:0008270">
    <property type="term" value="F:zinc ion binding"/>
    <property type="evidence" value="ECO:0007669"/>
    <property type="project" value="InterPro"/>
</dbReference>
<dbReference type="GO" id="GO:0046294">
    <property type="term" value="P:formaldehyde catabolic process"/>
    <property type="evidence" value="ECO:0007669"/>
    <property type="project" value="InterPro"/>
</dbReference>
<dbReference type="CDD" id="cd08300">
    <property type="entry name" value="alcohol_DH_class_III"/>
    <property type="match status" value="1"/>
</dbReference>
<dbReference type="FunFam" id="3.40.50.720:FF:000003">
    <property type="entry name" value="S-(hydroxymethyl)glutathione dehydrogenase"/>
    <property type="match status" value="1"/>
</dbReference>
<dbReference type="FunFam" id="3.90.180.10:FF:000001">
    <property type="entry name" value="S-(hydroxymethyl)glutathione dehydrogenase"/>
    <property type="match status" value="1"/>
</dbReference>
<dbReference type="Gene3D" id="3.90.180.10">
    <property type="entry name" value="Medium-chain alcohol dehydrogenases, catalytic domain"/>
    <property type="match status" value="1"/>
</dbReference>
<dbReference type="Gene3D" id="3.40.50.720">
    <property type="entry name" value="NAD(P)-binding Rossmann-like Domain"/>
    <property type="match status" value="1"/>
</dbReference>
<dbReference type="InterPro" id="IPR013149">
    <property type="entry name" value="ADH-like_C"/>
</dbReference>
<dbReference type="InterPro" id="IPR013154">
    <property type="entry name" value="ADH-like_N"/>
</dbReference>
<dbReference type="InterPro" id="IPR014183">
    <property type="entry name" value="ADH_3"/>
</dbReference>
<dbReference type="InterPro" id="IPR002328">
    <property type="entry name" value="ADH_Zn_CS"/>
</dbReference>
<dbReference type="InterPro" id="IPR011032">
    <property type="entry name" value="GroES-like_sf"/>
</dbReference>
<dbReference type="InterPro" id="IPR036291">
    <property type="entry name" value="NAD(P)-bd_dom_sf"/>
</dbReference>
<dbReference type="NCBIfam" id="TIGR02818">
    <property type="entry name" value="adh_III_F_hyde"/>
    <property type="match status" value="1"/>
</dbReference>
<dbReference type="PANTHER" id="PTHR43880">
    <property type="entry name" value="ALCOHOL DEHYDROGENASE"/>
    <property type="match status" value="1"/>
</dbReference>
<dbReference type="PANTHER" id="PTHR43880:SF4">
    <property type="entry name" value="ALCOHOL DEHYDROGENASE CLASS-3"/>
    <property type="match status" value="1"/>
</dbReference>
<dbReference type="Pfam" id="PF08240">
    <property type="entry name" value="ADH_N"/>
    <property type="match status" value="1"/>
</dbReference>
<dbReference type="Pfam" id="PF00107">
    <property type="entry name" value="ADH_zinc_N"/>
    <property type="match status" value="1"/>
</dbReference>
<dbReference type="SUPFAM" id="SSF50129">
    <property type="entry name" value="GroES-like"/>
    <property type="match status" value="2"/>
</dbReference>
<dbReference type="SUPFAM" id="SSF51735">
    <property type="entry name" value="NAD(P)-binding Rossmann-fold domains"/>
    <property type="match status" value="1"/>
</dbReference>
<dbReference type="PROSITE" id="PS00059">
    <property type="entry name" value="ADH_ZINC"/>
    <property type="match status" value="1"/>
</dbReference>
<proteinExistence type="evidence at protein level"/>
<organism>
    <name type="scientific">Scyliorhinus canicula</name>
    <name type="common">Small-spotted catshark</name>
    <name type="synonym">Squalus canicula</name>
    <dbReference type="NCBI Taxonomy" id="7830"/>
    <lineage>
        <taxon>Eukaryota</taxon>
        <taxon>Metazoa</taxon>
        <taxon>Chordata</taxon>
        <taxon>Craniata</taxon>
        <taxon>Vertebrata</taxon>
        <taxon>Chondrichthyes</taxon>
        <taxon>Elasmobranchii</taxon>
        <taxon>Galeomorphii</taxon>
        <taxon>Galeoidea</taxon>
        <taxon>Carcharhiniformes</taxon>
        <taxon>Scyliorhinidae</taxon>
        <taxon>Scyliorhinus</taxon>
    </lineage>
</organism>
<sequence length="376" mass="39937">AGTVGKVIKCKAAVAWEAGKPLCIEEIEVAPPKAHEVRIKIIATAVCHSDSYTLSGSDSEGLFPVILGHEGAGIVESVGEGVTCVKAGDRVIPLYIPQCGDCNFCLNPKTNLCQKIRVTQGQGLMPDKTSRFTCKGQLLYHYMGTSTFSEYTVVADISVAKIDEAAPLDKVCLLGCGISTGYGAAVNTAKVEPGSTCAVFGLGGVGLAGIMGCKAAGATRIIGVDLNKDKFTKAKEFGATEYINPKDYDKPIQEVLVGLTDGGVDYSFECIGNVKTMRAALEACHKGWGTSVIVGVAPAGHEIATRPFQLVTGRTWKGTAFGGWKSVESVPKLVKEYMAKKLKVDEFVTHTLPFNQINESFELMHAGKSIRCVLSF</sequence>
<protein>
    <recommendedName>
        <fullName evidence="1">Alcohol dehydrogenase class-3</fullName>
        <ecNumber evidence="1">1.1.1.1</ecNumber>
    </recommendedName>
    <alternativeName>
        <fullName evidence="1">Alcohol dehydrogenase class-III</fullName>
    </alternativeName>
    <alternativeName>
        <fullName evidence="1">Glutathione-dependent formaldehyde dehydrogenase</fullName>
        <shortName evidence="1">FALDH</shortName>
        <shortName evidence="1">FDH</shortName>
        <shortName evidence="1">GSH-FDH</shortName>
        <ecNumber>1.1.1.-</ecNumber>
    </alternativeName>
    <alternativeName>
        <fullName evidence="1">S-(hydroxymethyl)glutathione dehydrogenase</fullName>
        <ecNumber evidence="1">1.1.1.284</ecNumber>
    </alternativeName>
</protein>
<accession>P86884</accession>
<comment type="function">
    <text evidence="1 2">Class-III ADH is remarkably ineffective in oxidizing ethanol, but it readily catalyzes the oxidation of long-chain primary alcohols and the oxidation of S-(hydroxymethyl) glutathione. Also acts as a S-nitroso-glutathione reductase by catalyzing the NADH-dependent reduction of S-nitrosoglutathione, thereby regulating protein S-nitrosylation (By similarity).</text>
</comment>
<comment type="catalytic activity">
    <reaction evidence="1">
        <text>a primary alcohol + NAD(+) = an aldehyde + NADH + H(+)</text>
        <dbReference type="Rhea" id="RHEA:10736"/>
        <dbReference type="ChEBI" id="CHEBI:15378"/>
        <dbReference type="ChEBI" id="CHEBI:15734"/>
        <dbReference type="ChEBI" id="CHEBI:17478"/>
        <dbReference type="ChEBI" id="CHEBI:57540"/>
        <dbReference type="ChEBI" id="CHEBI:57945"/>
        <dbReference type="EC" id="1.1.1.1"/>
    </reaction>
</comment>
<comment type="catalytic activity">
    <reaction evidence="1">
        <text>a secondary alcohol + NAD(+) = a ketone + NADH + H(+)</text>
        <dbReference type="Rhea" id="RHEA:10740"/>
        <dbReference type="ChEBI" id="CHEBI:15378"/>
        <dbReference type="ChEBI" id="CHEBI:17087"/>
        <dbReference type="ChEBI" id="CHEBI:35681"/>
        <dbReference type="ChEBI" id="CHEBI:57540"/>
        <dbReference type="ChEBI" id="CHEBI:57945"/>
        <dbReference type="EC" id="1.1.1.1"/>
    </reaction>
</comment>
<comment type="catalytic activity">
    <reaction evidence="1">
        <text>S-(hydroxymethyl)glutathione + NADP(+) = S-formylglutathione + NADPH + H(+)</text>
        <dbReference type="Rhea" id="RHEA:19981"/>
        <dbReference type="ChEBI" id="CHEBI:15378"/>
        <dbReference type="ChEBI" id="CHEBI:57688"/>
        <dbReference type="ChEBI" id="CHEBI:57783"/>
        <dbReference type="ChEBI" id="CHEBI:58349"/>
        <dbReference type="ChEBI" id="CHEBI:58758"/>
        <dbReference type="EC" id="1.1.1.284"/>
    </reaction>
</comment>
<comment type="catalytic activity">
    <reaction evidence="1">
        <text>S-(hydroxymethyl)glutathione + NAD(+) = S-formylglutathione + NADH + H(+)</text>
        <dbReference type="Rhea" id="RHEA:19985"/>
        <dbReference type="ChEBI" id="CHEBI:15378"/>
        <dbReference type="ChEBI" id="CHEBI:57540"/>
        <dbReference type="ChEBI" id="CHEBI:57688"/>
        <dbReference type="ChEBI" id="CHEBI:57945"/>
        <dbReference type="ChEBI" id="CHEBI:58758"/>
        <dbReference type="EC" id="1.1.1.284"/>
    </reaction>
</comment>
<comment type="catalytic activity">
    <reaction evidence="2">
        <text>S-nitrosoglutathione + NADH + H(+) = S-(hydroxysulfenamide)glutathione + NAD(+)</text>
        <dbReference type="Rhea" id="RHEA:78371"/>
        <dbReference type="ChEBI" id="CHEBI:15378"/>
        <dbReference type="ChEBI" id="CHEBI:57540"/>
        <dbReference type="ChEBI" id="CHEBI:57945"/>
        <dbReference type="ChEBI" id="CHEBI:145544"/>
        <dbReference type="ChEBI" id="CHEBI:229723"/>
    </reaction>
    <physiologicalReaction direction="left-to-right" evidence="2">
        <dbReference type="Rhea" id="RHEA:78372"/>
    </physiologicalReaction>
</comment>
<comment type="cofactor">
    <cofactor evidence="1">
        <name>Zn(2+)</name>
        <dbReference type="ChEBI" id="CHEBI:29105"/>
    </cofactor>
    <text evidence="1">Binds 2 Zn(2+) ions per subunit.</text>
</comment>
<comment type="subunit">
    <text evidence="1">Homodimer.</text>
</comment>
<comment type="subcellular location">
    <subcellularLocation>
        <location evidence="5">Cytoplasm</location>
    </subcellularLocation>
</comment>
<comment type="similarity">
    <text evidence="4">Belongs to the zinc-containing alcohol dehydrogenase family. Class-III subfamily.</text>
</comment>
<keyword id="KW-0007">Acetylation</keyword>
<keyword id="KW-0963">Cytoplasm</keyword>
<keyword id="KW-0903">Direct protein sequencing</keyword>
<keyword id="KW-0479">Metal-binding</keyword>
<keyword id="KW-0520">NAD</keyword>
<keyword id="KW-0560">Oxidoreductase</keyword>
<keyword id="KW-0862">Zinc</keyword>
<reference evidence="5" key="1">
    <citation type="submission" date="2010-12" db="UniProtKB">
        <authorList>
            <person name="Cederlund E."/>
            <person name="Hedlund J."/>
            <person name="Hjelmqvist L."/>
            <person name="Jonsson A."/>
            <person name="Shafqat J."/>
        </authorList>
    </citation>
    <scope>PROTEIN SEQUENCE</scope>
    <source>
        <tissue>Liver</tissue>
    </source>
</reference>
<feature type="chain" id="PRO_0000405312" description="Alcohol dehydrogenase class-3">
    <location>
        <begin position="1"/>
        <end position="376"/>
    </location>
</feature>
<feature type="binding site" evidence="1">
    <location>
        <position position="47"/>
    </location>
    <ligand>
        <name>Zn(2+)</name>
        <dbReference type="ChEBI" id="CHEBI:29105"/>
        <label>1</label>
        <note>catalytic</note>
    </ligand>
</feature>
<feature type="binding site" evidence="1">
    <location>
        <position position="69"/>
    </location>
    <ligand>
        <name>Zn(2+)</name>
        <dbReference type="ChEBI" id="CHEBI:29105"/>
        <label>1</label>
        <note>catalytic</note>
    </ligand>
</feature>
<feature type="binding site" evidence="1">
    <location>
        <position position="99"/>
    </location>
    <ligand>
        <name>Zn(2+)</name>
        <dbReference type="ChEBI" id="CHEBI:29105"/>
        <label>2</label>
    </ligand>
</feature>
<feature type="binding site" evidence="1">
    <location>
        <position position="102"/>
    </location>
    <ligand>
        <name>Zn(2+)</name>
        <dbReference type="ChEBI" id="CHEBI:29105"/>
        <label>2</label>
    </ligand>
</feature>
<feature type="binding site" evidence="1">
    <location>
        <position position="105"/>
    </location>
    <ligand>
        <name>Zn(2+)</name>
        <dbReference type="ChEBI" id="CHEBI:29105"/>
        <label>2</label>
    </ligand>
</feature>
<feature type="binding site" evidence="1">
    <location>
        <position position="113"/>
    </location>
    <ligand>
        <name>Zn(2+)</name>
        <dbReference type="ChEBI" id="CHEBI:29105"/>
        <label>2</label>
    </ligand>
</feature>
<feature type="binding site" evidence="1">
    <location>
        <position position="176"/>
    </location>
    <ligand>
        <name>Zn(2+)</name>
        <dbReference type="ChEBI" id="CHEBI:29105"/>
        <label>1</label>
        <note>catalytic</note>
    </ligand>
</feature>
<feature type="site" description="Important for FDH activity and activation by fatty acids" evidence="1">
    <location>
        <position position="117"/>
    </location>
</feature>
<feature type="modified residue" description="N-acetylalanine" evidence="3">
    <location>
        <position position="1"/>
    </location>
</feature>
<evidence type="ECO:0000250" key="1">
    <source>
        <dbReference type="UniProtKB" id="P11766"/>
    </source>
</evidence>
<evidence type="ECO:0000250" key="2">
    <source>
        <dbReference type="UniProtKB" id="P28474"/>
    </source>
</evidence>
<evidence type="ECO:0000250" key="3">
    <source>
        <dbReference type="UniProtKB" id="P81600"/>
    </source>
</evidence>
<evidence type="ECO:0000255" key="4"/>
<evidence type="ECO:0000305" key="5"/>